<reference key="1">
    <citation type="submission" date="2008-04" db="EMBL/GenBank/DDBJ databases">
        <title>Complete sequence of Yersinia pseudotuberculosis PB1/+.</title>
        <authorList>
            <person name="Copeland A."/>
            <person name="Lucas S."/>
            <person name="Lapidus A."/>
            <person name="Glavina del Rio T."/>
            <person name="Dalin E."/>
            <person name="Tice H."/>
            <person name="Bruce D."/>
            <person name="Goodwin L."/>
            <person name="Pitluck S."/>
            <person name="Munk A.C."/>
            <person name="Brettin T."/>
            <person name="Detter J.C."/>
            <person name="Han C."/>
            <person name="Tapia R."/>
            <person name="Schmutz J."/>
            <person name="Larimer F."/>
            <person name="Land M."/>
            <person name="Hauser L."/>
            <person name="Challacombe J.F."/>
            <person name="Green L."/>
            <person name="Lindler L.E."/>
            <person name="Nikolich M.P."/>
            <person name="Richardson P."/>
        </authorList>
    </citation>
    <scope>NUCLEOTIDE SEQUENCE [LARGE SCALE GENOMIC DNA]</scope>
    <source>
        <strain>PB1/+</strain>
    </source>
</reference>
<comment type="function">
    <text evidence="1">Catalyzes the phosphorolysis of diverse nucleosides, yielding D-ribose 1-phosphate and the respective free bases. Can use uridine, adenosine, guanosine, cytidine, thymidine, inosine and xanthosine as substrates. Also catalyzes the reverse reactions.</text>
</comment>
<comment type="catalytic activity">
    <reaction evidence="1">
        <text>a purine D-ribonucleoside + phosphate = a purine nucleobase + alpha-D-ribose 1-phosphate</text>
        <dbReference type="Rhea" id="RHEA:19805"/>
        <dbReference type="ChEBI" id="CHEBI:26386"/>
        <dbReference type="ChEBI" id="CHEBI:43474"/>
        <dbReference type="ChEBI" id="CHEBI:57720"/>
        <dbReference type="ChEBI" id="CHEBI:142355"/>
        <dbReference type="EC" id="2.4.2.1"/>
    </reaction>
</comment>
<comment type="catalytic activity">
    <reaction evidence="1">
        <text>adenosine + phosphate = alpha-D-ribose 1-phosphate + adenine</text>
        <dbReference type="Rhea" id="RHEA:27642"/>
        <dbReference type="ChEBI" id="CHEBI:16335"/>
        <dbReference type="ChEBI" id="CHEBI:16708"/>
        <dbReference type="ChEBI" id="CHEBI:43474"/>
        <dbReference type="ChEBI" id="CHEBI:57720"/>
        <dbReference type="EC" id="2.4.2.1"/>
    </reaction>
</comment>
<comment type="catalytic activity">
    <reaction evidence="1">
        <text>cytidine + phosphate = cytosine + alpha-D-ribose 1-phosphate</text>
        <dbReference type="Rhea" id="RHEA:52540"/>
        <dbReference type="ChEBI" id="CHEBI:16040"/>
        <dbReference type="ChEBI" id="CHEBI:17562"/>
        <dbReference type="ChEBI" id="CHEBI:43474"/>
        <dbReference type="ChEBI" id="CHEBI:57720"/>
        <dbReference type="EC" id="2.4.2.2"/>
    </reaction>
</comment>
<comment type="catalytic activity">
    <reaction evidence="1">
        <text>guanosine + phosphate = alpha-D-ribose 1-phosphate + guanine</text>
        <dbReference type="Rhea" id="RHEA:13233"/>
        <dbReference type="ChEBI" id="CHEBI:16235"/>
        <dbReference type="ChEBI" id="CHEBI:16750"/>
        <dbReference type="ChEBI" id="CHEBI:43474"/>
        <dbReference type="ChEBI" id="CHEBI:57720"/>
        <dbReference type="EC" id="2.4.2.1"/>
    </reaction>
</comment>
<comment type="catalytic activity">
    <reaction evidence="1">
        <text>inosine + phosphate = alpha-D-ribose 1-phosphate + hypoxanthine</text>
        <dbReference type="Rhea" id="RHEA:27646"/>
        <dbReference type="ChEBI" id="CHEBI:17368"/>
        <dbReference type="ChEBI" id="CHEBI:17596"/>
        <dbReference type="ChEBI" id="CHEBI:43474"/>
        <dbReference type="ChEBI" id="CHEBI:57720"/>
        <dbReference type="EC" id="2.4.2.1"/>
    </reaction>
</comment>
<comment type="catalytic activity">
    <reaction evidence="1">
        <text>thymidine + phosphate = 2-deoxy-alpha-D-ribose 1-phosphate + thymine</text>
        <dbReference type="Rhea" id="RHEA:16037"/>
        <dbReference type="ChEBI" id="CHEBI:17748"/>
        <dbReference type="ChEBI" id="CHEBI:17821"/>
        <dbReference type="ChEBI" id="CHEBI:43474"/>
        <dbReference type="ChEBI" id="CHEBI:57259"/>
        <dbReference type="EC" id="2.4.2.2"/>
    </reaction>
</comment>
<comment type="catalytic activity">
    <reaction evidence="1">
        <text>uridine + phosphate = alpha-D-ribose 1-phosphate + uracil</text>
        <dbReference type="Rhea" id="RHEA:24388"/>
        <dbReference type="ChEBI" id="CHEBI:16704"/>
        <dbReference type="ChEBI" id="CHEBI:17568"/>
        <dbReference type="ChEBI" id="CHEBI:43474"/>
        <dbReference type="ChEBI" id="CHEBI:57720"/>
        <dbReference type="EC" id="2.4.2.2"/>
    </reaction>
</comment>
<comment type="catalytic activity">
    <reaction evidence="1">
        <text>xanthosine + phosphate = alpha-D-ribose 1-phosphate + xanthine</text>
        <dbReference type="Rhea" id="RHEA:27638"/>
        <dbReference type="ChEBI" id="CHEBI:17712"/>
        <dbReference type="ChEBI" id="CHEBI:18107"/>
        <dbReference type="ChEBI" id="CHEBI:43474"/>
        <dbReference type="ChEBI" id="CHEBI:57720"/>
        <dbReference type="EC" id="2.4.2.1"/>
    </reaction>
</comment>
<comment type="similarity">
    <text evidence="1">Belongs to the nucleoside phosphorylase PpnP family.</text>
</comment>
<accession>B2K6R0</accession>
<keyword id="KW-0328">Glycosyltransferase</keyword>
<keyword id="KW-0808">Transferase</keyword>
<gene>
    <name evidence="1" type="primary">ppnP</name>
    <name type="ordered locus">YPTS_0953</name>
</gene>
<protein>
    <recommendedName>
        <fullName evidence="1">Pyrimidine/purine nucleoside phosphorylase</fullName>
        <ecNumber evidence="1">2.4.2.1</ecNumber>
        <ecNumber evidence="1">2.4.2.2</ecNumber>
    </recommendedName>
    <alternativeName>
        <fullName evidence="1">Adenosine phosphorylase</fullName>
    </alternativeName>
    <alternativeName>
        <fullName evidence="1">Cytidine phosphorylase</fullName>
    </alternativeName>
    <alternativeName>
        <fullName evidence="1">Guanosine phosphorylase</fullName>
    </alternativeName>
    <alternativeName>
        <fullName evidence="1">Inosine phosphorylase</fullName>
    </alternativeName>
    <alternativeName>
        <fullName evidence="1">Thymidine phosphorylase</fullName>
    </alternativeName>
    <alternativeName>
        <fullName evidence="1">Uridine phosphorylase</fullName>
    </alternativeName>
    <alternativeName>
        <fullName evidence="1">Xanthosine phosphorylase</fullName>
    </alternativeName>
</protein>
<proteinExistence type="inferred from homology"/>
<organism>
    <name type="scientific">Yersinia pseudotuberculosis serotype IB (strain PB1/+)</name>
    <dbReference type="NCBI Taxonomy" id="502801"/>
    <lineage>
        <taxon>Bacteria</taxon>
        <taxon>Pseudomonadati</taxon>
        <taxon>Pseudomonadota</taxon>
        <taxon>Gammaproteobacteria</taxon>
        <taxon>Enterobacterales</taxon>
        <taxon>Yersiniaceae</taxon>
        <taxon>Yersinia</taxon>
    </lineage>
</organism>
<name>PPNP_YERPB</name>
<sequence>MLKFNEYFTGKVKSIGFDSDSIGPASVGVMEKGEYTFSTAKAEEMTVITGSLKVLIPGSPDWQTFMPGETFYIPGESEFNLQVAEASSYLCKYLS</sequence>
<dbReference type="EC" id="2.4.2.1" evidence="1"/>
<dbReference type="EC" id="2.4.2.2" evidence="1"/>
<dbReference type="EMBL" id="CP001048">
    <property type="protein sequence ID" value="ACC87934.1"/>
    <property type="molecule type" value="Genomic_DNA"/>
</dbReference>
<dbReference type="RefSeq" id="WP_002208692.1">
    <property type="nucleotide sequence ID" value="NZ_CP009780.1"/>
</dbReference>
<dbReference type="SMR" id="B2K6R0"/>
<dbReference type="GeneID" id="57975503"/>
<dbReference type="KEGG" id="ypb:YPTS_0953"/>
<dbReference type="PATRIC" id="fig|502801.10.peg.292"/>
<dbReference type="GO" id="GO:0005829">
    <property type="term" value="C:cytosol"/>
    <property type="evidence" value="ECO:0007669"/>
    <property type="project" value="TreeGrafter"/>
</dbReference>
<dbReference type="GO" id="GO:0047975">
    <property type="term" value="F:guanosine phosphorylase activity"/>
    <property type="evidence" value="ECO:0007669"/>
    <property type="project" value="UniProtKB-EC"/>
</dbReference>
<dbReference type="GO" id="GO:0004731">
    <property type="term" value="F:purine-nucleoside phosphorylase activity"/>
    <property type="evidence" value="ECO:0007669"/>
    <property type="project" value="UniProtKB-UniRule"/>
</dbReference>
<dbReference type="GO" id="GO:0009032">
    <property type="term" value="F:thymidine phosphorylase activity"/>
    <property type="evidence" value="ECO:0007669"/>
    <property type="project" value="UniProtKB-EC"/>
</dbReference>
<dbReference type="GO" id="GO:0004850">
    <property type="term" value="F:uridine phosphorylase activity"/>
    <property type="evidence" value="ECO:0007669"/>
    <property type="project" value="UniProtKB-EC"/>
</dbReference>
<dbReference type="FunFam" id="2.60.120.10:FF:000016">
    <property type="entry name" value="Pyrimidine/purine nucleoside phosphorylase"/>
    <property type="match status" value="1"/>
</dbReference>
<dbReference type="Gene3D" id="2.60.120.10">
    <property type="entry name" value="Jelly Rolls"/>
    <property type="match status" value="1"/>
</dbReference>
<dbReference type="HAMAP" id="MF_01537">
    <property type="entry name" value="Nucleos_phosphorylase_PpnP"/>
    <property type="match status" value="1"/>
</dbReference>
<dbReference type="InterPro" id="IPR009664">
    <property type="entry name" value="Ppnp"/>
</dbReference>
<dbReference type="InterPro" id="IPR014710">
    <property type="entry name" value="RmlC-like_jellyroll"/>
</dbReference>
<dbReference type="InterPro" id="IPR011051">
    <property type="entry name" value="RmlC_Cupin_sf"/>
</dbReference>
<dbReference type="NCBIfam" id="NF007875">
    <property type="entry name" value="PRK10579.1"/>
    <property type="match status" value="1"/>
</dbReference>
<dbReference type="PANTHER" id="PTHR36540">
    <property type="entry name" value="PYRIMIDINE/PURINE NUCLEOSIDE PHOSPHORYLASE"/>
    <property type="match status" value="1"/>
</dbReference>
<dbReference type="PANTHER" id="PTHR36540:SF1">
    <property type="entry name" value="PYRIMIDINE_PURINE NUCLEOSIDE PHOSPHORYLASE"/>
    <property type="match status" value="1"/>
</dbReference>
<dbReference type="Pfam" id="PF06865">
    <property type="entry name" value="Ppnp"/>
    <property type="match status" value="1"/>
</dbReference>
<dbReference type="SUPFAM" id="SSF51182">
    <property type="entry name" value="RmlC-like cupins"/>
    <property type="match status" value="1"/>
</dbReference>
<evidence type="ECO:0000255" key="1">
    <source>
        <dbReference type="HAMAP-Rule" id="MF_01537"/>
    </source>
</evidence>
<feature type="chain" id="PRO_1000198686" description="Pyrimidine/purine nucleoside phosphorylase">
    <location>
        <begin position="1"/>
        <end position="95"/>
    </location>
</feature>